<dbReference type="EC" id="3.6.5.4" evidence="1"/>
<dbReference type="EMBL" id="CP000099">
    <property type="protein sequence ID" value="AAZ69891.1"/>
    <property type="molecule type" value="Genomic_DNA"/>
</dbReference>
<dbReference type="SMR" id="Q46E01"/>
<dbReference type="STRING" id="269797.Mbar_A0918"/>
<dbReference type="PaxDb" id="269797-Mbar_A0918"/>
<dbReference type="KEGG" id="mba:Mbar_A0918"/>
<dbReference type="eggNOG" id="arCOG01228">
    <property type="taxonomic scope" value="Archaea"/>
</dbReference>
<dbReference type="HOGENOM" id="CLU_009301_6_0_2"/>
<dbReference type="OrthoDB" id="52849at2157"/>
<dbReference type="GO" id="GO:0048500">
    <property type="term" value="C:signal recognition particle"/>
    <property type="evidence" value="ECO:0007669"/>
    <property type="project" value="UniProtKB-UniRule"/>
</dbReference>
<dbReference type="GO" id="GO:0008312">
    <property type="term" value="F:7S RNA binding"/>
    <property type="evidence" value="ECO:0007669"/>
    <property type="project" value="UniProtKB-UniRule"/>
</dbReference>
<dbReference type="GO" id="GO:0016887">
    <property type="term" value="F:ATP hydrolysis activity"/>
    <property type="evidence" value="ECO:0007669"/>
    <property type="project" value="InterPro"/>
</dbReference>
<dbReference type="GO" id="GO:0005525">
    <property type="term" value="F:GTP binding"/>
    <property type="evidence" value="ECO:0007669"/>
    <property type="project" value="UniProtKB-UniRule"/>
</dbReference>
<dbReference type="GO" id="GO:0003924">
    <property type="term" value="F:GTPase activity"/>
    <property type="evidence" value="ECO:0007669"/>
    <property type="project" value="UniProtKB-UniRule"/>
</dbReference>
<dbReference type="GO" id="GO:0006614">
    <property type="term" value="P:SRP-dependent cotranslational protein targeting to membrane"/>
    <property type="evidence" value="ECO:0007669"/>
    <property type="project" value="InterPro"/>
</dbReference>
<dbReference type="CDD" id="cd17875">
    <property type="entry name" value="SRP54_G"/>
    <property type="match status" value="1"/>
</dbReference>
<dbReference type="FunFam" id="3.40.50.300:FF:000022">
    <property type="entry name" value="Signal recognition particle 54 kDa subunit"/>
    <property type="match status" value="1"/>
</dbReference>
<dbReference type="Gene3D" id="3.40.50.300">
    <property type="entry name" value="P-loop containing nucleotide triphosphate hydrolases"/>
    <property type="match status" value="1"/>
</dbReference>
<dbReference type="Gene3D" id="1.20.120.140">
    <property type="entry name" value="Signal recognition particle SRP54, nucleotide-binding domain"/>
    <property type="match status" value="1"/>
</dbReference>
<dbReference type="Gene3D" id="1.10.260.30">
    <property type="entry name" value="Signal recognition particle, SRP54 subunit, M-domain"/>
    <property type="match status" value="1"/>
</dbReference>
<dbReference type="HAMAP" id="MF_00306">
    <property type="entry name" value="SRP54"/>
    <property type="match status" value="1"/>
</dbReference>
<dbReference type="InterPro" id="IPR003593">
    <property type="entry name" value="AAA+_ATPase"/>
</dbReference>
<dbReference type="InterPro" id="IPR027417">
    <property type="entry name" value="P-loop_NTPase"/>
</dbReference>
<dbReference type="InterPro" id="IPR036891">
    <property type="entry name" value="Signal_recog_part_SRP54_M_sf"/>
</dbReference>
<dbReference type="InterPro" id="IPR013822">
    <property type="entry name" value="Signal_recog_particl_SRP54_hlx"/>
</dbReference>
<dbReference type="InterPro" id="IPR004125">
    <property type="entry name" value="Signal_recog_particle_SRP54_M"/>
</dbReference>
<dbReference type="InterPro" id="IPR036225">
    <property type="entry name" value="SRP/SRP_N"/>
</dbReference>
<dbReference type="InterPro" id="IPR022941">
    <property type="entry name" value="SRP54"/>
</dbReference>
<dbReference type="InterPro" id="IPR000897">
    <property type="entry name" value="SRP54_GTPase_dom"/>
</dbReference>
<dbReference type="InterPro" id="IPR042101">
    <property type="entry name" value="SRP54_N_sf"/>
</dbReference>
<dbReference type="PANTHER" id="PTHR11564">
    <property type="entry name" value="SIGNAL RECOGNITION PARTICLE 54K PROTEIN SRP54"/>
    <property type="match status" value="1"/>
</dbReference>
<dbReference type="PANTHER" id="PTHR11564:SF5">
    <property type="entry name" value="SIGNAL RECOGNITION PARTICLE SUBUNIT SRP54"/>
    <property type="match status" value="1"/>
</dbReference>
<dbReference type="Pfam" id="PF00448">
    <property type="entry name" value="SRP54"/>
    <property type="match status" value="1"/>
</dbReference>
<dbReference type="Pfam" id="PF02881">
    <property type="entry name" value="SRP54_N"/>
    <property type="match status" value="1"/>
</dbReference>
<dbReference type="Pfam" id="PF02978">
    <property type="entry name" value="SRP_SPB"/>
    <property type="match status" value="1"/>
</dbReference>
<dbReference type="SMART" id="SM00382">
    <property type="entry name" value="AAA"/>
    <property type="match status" value="1"/>
</dbReference>
<dbReference type="SMART" id="SM00962">
    <property type="entry name" value="SRP54"/>
    <property type="match status" value="1"/>
</dbReference>
<dbReference type="SMART" id="SM00963">
    <property type="entry name" value="SRP54_N"/>
    <property type="match status" value="1"/>
</dbReference>
<dbReference type="SUPFAM" id="SSF47364">
    <property type="entry name" value="Domain of the SRP/SRP receptor G-proteins"/>
    <property type="match status" value="1"/>
</dbReference>
<dbReference type="SUPFAM" id="SSF52540">
    <property type="entry name" value="P-loop containing nucleoside triphosphate hydrolases"/>
    <property type="match status" value="1"/>
</dbReference>
<dbReference type="SUPFAM" id="SSF47446">
    <property type="entry name" value="Signal peptide-binding domain"/>
    <property type="match status" value="1"/>
</dbReference>
<dbReference type="PROSITE" id="PS00300">
    <property type="entry name" value="SRP54"/>
    <property type="match status" value="1"/>
</dbReference>
<feature type="chain" id="PRO_0000300757" description="Signal recognition particle 54 kDa protein">
    <location>
        <begin position="1"/>
        <end position="443"/>
    </location>
</feature>
<feature type="binding site" evidence="1">
    <location>
        <begin position="104"/>
        <end position="111"/>
    </location>
    <ligand>
        <name>GTP</name>
        <dbReference type="ChEBI" id="CHEBI:37565"/>
    </ligand>
</feature>
<feature type="binding site" evidence="1">
    <location>
        <begin position="184"/>
        <end position="188"/>
    </location>
    <ligand>
        <name>GTP</name>
        <dbReference type="ChEBI" id="CHEBI:37565"/>
    </ligand>
</feature>
<feature type="binding site" evidence="1">
    <location>
        <begin position="242"/>
        <end position="245"/>
    </location>
    <ligand>
        <name>GTP</name>
        <dbReference type="ChEBI" id="CHEBI:37565"/>
    </ligand>
</feature>
<reference key="1">
    <citation type="journal article" date="2006" name="J. Bacteriol.">
        <title>The Methanosarcina barkeri genome: comparative analysis with Methanosarcina acetivorans and Methanosarcina mazei reveals extensive rearrangement within methanosarcinal genomes.</title>
        <authorList>
            <person name="Maeder D.L."/>
            <person name="Anderson I."/>
            <person name="Brettin T.S."/>
            <person name="Bruce D.C."/>
            <person name="Gilna P."/>
            <person name="Han C.S."/>
            <person name="Lapidus A."/>
            <person name="Metcalf W.W."/>
            <person name="Saunders E."/>
            <person name="Tapia R."/>
            <person name="Sowers K.R."/>
        </authorList>
    </citation>
    <scope>NUCLEOTIDE SEQUENCE [LARGE SCALE GENOMIC DNA]</scope>
    <source>
        <strain>Fusaro / DSM 804</strain>
    </source>
</reference>
<organism>
    <name type="scientific">Methanosarcina barkeri (strain Fusaro / DSM 804)</name>
    <dbReference type="NCBI Taxonomy" id="269797"/>
    <lineage>
        <taxon>Archaea</taxon>
        <taxon>Methanobacteriati</taxon>
        <taxon>Methanobacteriota</taxon>
        <taxon>Stenosarchaea group</taxon>
        <taxon>Methanomicrobia</taxon>
        <taxon>Methanosarcinales</taxon>
        <taxon>Methanosarcinaceae</taxon>
        <taxon>Methanosarcina</taxon>
    </lineage>
</organism>
<proteinExistence type="inferred from homology"/>
<gene>
    <name evidence="1" type="primary">srp54</name>
    <name type="ordered locus">Mbar_A0918</name>
</gene>
<evidence type="ECO:0000255" key="1">
    <source>
        <dbReference type="HAMAP-Rule" id="MF_00306"/>
    </source>
</evidence>
<sequence length="443" mass="48816">MVMEKLGDSLQGALKKLIGAGRIDERTVNEVVKDIQRALLQADVNVKLVMGMSQRIKERAMKEAPPAGMNPREHVIRIVYQELMEIIGKGAEIQLKPQIIMMVGLQGSGKTTSTAKLARYFQRKGLKAGVVAADTFRPGAYHQLKTLCEKLNVAFYGEENNPDAVEITRNGLKALEKYDVKIVDTAGRHALEADLIEEMEQINAVAKPDHKFMVLDAGIGQQASQQAHAFNDSVGITGVIITKLDGTAKGGGALSAVSETKAPIAFIGVGETPEDFEKFEADRFISRLLGMGDLKSLMEKAEETLSEEDVNVEALMQGRFTLKDMYKQLEAMNKMGPLKQIMSMLPLGMGGMGGVKLSDEMFQATSDKMKNYKTIMDSMTEEEMTDPKLIGGSRIKRISRGSGCSPEEVRELLKYHKTMQTALKGFRGGKFNIQKMMKKRLGM</sequence>
<accession>Q46E01</accession>
<protein>
    <recommendedName>
        <fullName evidence="1">Signal recognition particle 54 kDa protein</fullName>
        <shortName evidence="1">SRP54</shortName>
        <ecNumber evidence="1">3.6.5.4</ecNumber>
    </recommendedName>
</protein>
<name>SRP54_METBF</name>
<keyword id="KW-0963">Cytoplasm</keyword>
<keyword id="KW-0342">GTP-binding</keyword>
<keyword id="KW-0378">Hydrolase</keyword>
<keyword id="KW-0547">Nucleotide-binding</keyword>
<keyword id="KW-0687">Ribonucleoprotein</keyword>
<keyword id="KW-0694">RNA-binding</keyword>
<keyword id="KW-0733">Signal recognition particle</keyword>
<comment type="function">
    <text evidence="1">Involved in targeting and insertion of nascent membrane proteins into the cytoplasmic membrane. Binds to the hydrophobic signal sequence of the ribosome-nascent chain (RNC) as it emerges from the ribosomes. The SRP-RNC complex is then targeted to the cytoplasmic membrane where it interacts with the SRP receptor FtsY.</text>
</comment>
<comment type="catalytic activity">
    <reaction evidence="1">
        <text>GTP + H2O = GDP + phosphate + H(+)</text>
        <dbReference type="Rhea" id="RHEA:19669"/>
        <dbReference type="ChEBI" id="CHEBI:15377"/>
        <dbReference type="ChEBI" id="CHEBI:15378"/>
        <dbReference type="ChEBI" id="CHEBI:37565"/>
        <dbReference type="ChEBI" id="CHEBI:43474"/>
        <dbReference type="ChEBI" id="CHEBI:58189"/>
        <dbReference type="EC" id="3.6.5.4"/>
    </reaction>
</comment>
<comment type="subunit">
    <text evidence="1">Part of the signal recognition particle protein translocation system, which is composed of SRP and FtsY. Archaeal SRP consists of a 7S RNA molecule of 300 nucleotides and two protein subunits: SRP54 and SRP19.</text>
</comment>
<comment type="subcellular location">
    <subcellularLocation>
        <location evidence="1">Cytoplasm</location>
    </subcellularLocation>
    <text evidence="1">The SRP-RNC complex is targeted to the cytoplasmic membrane.</text>
</comment>
<comment type="domain">
    <text evidence="1">Composed of three domains: the N-terminal N domain, which is responsible for interactions with the ribosome, the central G domain, which binds GTP, and the C-terminal M domain, which binds the RNA and the signal sequence of the RNC.</text>
</comment>
<comment type="similarity">
    <text evidence="1">Belongs to the GTP-binding SRP family. SRP54 subfamily.</text>
</comment>